<feature type="chain" id="PRO_0000329876" description="Polyribonucleotide nucleotidyltransferase">
    <location>
        <begin position="1"/>
        <end position="710"/>
    </location>
</feature>
<feature type="domain" description="KH" evidence="1">
    <location>
        <begin position="556"/>
        <end position="615"/>
    </location>
</feature>
<feature type="domain" description="S1 motif" evidence="1">
    <location>
        <begin position="625"/>
        <end position="693"/>
    </location>
</feature>
<feature type="region of interest" description="Disordered" evidence="2">
    <location>
        <begin position="691"/>
        <end position="710"/>
    </location>
</feature>
<feature type="compositionally biased region" description="Basic and acidic residues" evidence="2">
    <location>
        <begin position="700"/>
        <end position="710"/>
    </location>
</feature>
<feature type="binding site" evidence="1">
    <location>
        <position position="489"/>
    </location>
    <ligand>
        <name>Mg(2+)</name>
        <dbReference type="ChEBI" id="CHEBI:18420"/>
    </ligand>
</feature>
<feature type="binding site" evidence="1">
    <location>
        <position position="495"/>
    </location>
    <ligand>
        <name>Mg(2+)</name>
        <dbReference type="ChEBI" id="CHEBI:18420"/>
    </ligand>
</feature>
<protein>
    <recommendedName>
        <fullName evidence="1">Polyribonucleotide nucleotidyltransferase</fullName>
        <ecNumber evidence="1">2.7.7.8</ecNumber>
    </recommendedName>
    <alternativeName>
        <fullName evidence="1">Polynucleotide phosphorylase</fullName>
        <shortName evidence="1">PNPase</shortName>
    </alternativeName>
</protein>
<name>PNP_STRPD</name>
<dbReference type="EC" id="2.7.7.8" evidence="1"/>
<dbReference type="EMBL" id="CP000260">
    <property type="protein sequence ID" value="ABF34793.1"/>
    <property type="molecule type" value="Genomic_DNA"/>
</dbReference>
<dbReference type="RefSeq" id="WP_011285185.1">
    <property type="nucleotide sequence ID" value="NZ_CVUH01000011.1"/>
</dbReference>
<dbReference type="SMR" id="Q1JEW6"/>
<dbReference type="KEGG" id="sph:MGAS10270_Spy1728"/>
<dbReference type="HOGENOM" id="CLU_004217_2_2_9"/>
<dbReference type="Proteomes" id="UP000002436">
    <property type="component" value="Chromosome"/>
</dbReference>
<dbReference type="GO" id="GO:0005829">
    <property type="term" value="C:cytosol"/>
    <property type="evidence" value="ECO:0007669"/>
    <property type="project" value="TreeGrafter"/>
</dbReference>
<dbReference type="GO" id="GO:0000175">
    <property type="term" value="F:3'-5'-RNA exonuclease activity"/>
    <property type="evidence" value="ECO:0007669"/>
    <property type="project" value="TreeGrafter"/>
</dbReference>
<dbReference type="GO" id="GO:0000287">
    <property type="term" value="F:magnesium ion binding"/>
    <property type="evidence" value="ECO:0007669"/>
    <property type="project" value="UniProtKB-UniRule"/>
</dbReference>
<dbReference type="GO" id="GO:0004654">
    <property type="term" value="F:polyribonucleotide nucleotidyltransferase activity"/>
    <property type="evidence" value="ECO:0007669"/>
    <property type="project" value="UniProtKB-UniRule"/>
</dbReference>
<dbReference type="GO" id="GO:0003723">
    <property type="term" value="F:RNA binding"/>
    <property type="evidence" value="ECO:0007669"/>
    <property type="project" value="UniProtKB-UniRule"/>
</dbReference>
<dbReference type="GO" id="GO:0006402">
    <property type="term" value="P:mRNA catabolic process"/>
    <property type="evidence" value="ECO:0007669"/>
    <property type="project" value="UniProtKB-UniRule"/>
</dbReference>
<dbReference type="GO" id="GO:0006396">
    <property type="term" value="P:RNA processing"/>
    <property type="evidence" value="ECO:0007669"/>
    <property type="project" value="InterPro"/>
</dbReference>
<dbReference type="CDD" id="cd02393">
    <property type="entry name" value="KH-I_PNPase"/>
    <property type="match status" value="1"/>
</dbReference>
<dbReference type="CDD" id="cd11363">
    <property type="entry name" value="RNase_PH_PNPase_1"/>
    <property type="match status" value="1"/>
</dbReference>
<dbReference type="CDD" id="cd11364">
    <property type="entry name" value="RNase_PH_PNPase_2"/>
    <property type="match status" value="1"/>
</dbReference>
<dbReference type="FunFam" id="2.40.50.140:FF:000023">
    <property type="entry name" value="Polyribonucleotide nucleotidyltransferase"/>
    <property type="match status" value="1"/>
</dbReference>
<dbReference type="FunFam" id="3.30.1370.10:FF:000001">
    <property type="entry name" value="Polyribonucleotide nucleotidyltransferase"/>
    <property type="match status" value="1"/>
</dbReference>
<dbReference type="FunFam" id="3.30.230.70:FF:000001">
    <property type="entry name" value="Polyribonucleotide nucleotidyltransferase"/>
    <property type="match status" value="1"/>
</dbReference>
<dbReference type="FunFam" id="3.30.230.70:FF:000002">
    <property type="entry name" value="Polyribonucleotide nucleotidyltransferase"/>
    <property type="match status" value="1"/>
</dbReference>
<dbReference type="Gene3D" id="3.30.230.70">
    <property type="entry name" value="GHMP Kinase, N-terminal domain"/>
    <property type="match status" value="2"/>
</dbReference>
<dbReference type="Gene3D" id="3.30.1370.10">
    <property type="entry name" value="K Homology domain, type 1"/>
    <property type="match status" value="1"/>
</dbReference>
<dbReference type="Gene3D" id="2.40.50.140">
    <property type="entry name" value="Nucleic acid-binding proteins"/>
    <property type="match status" value="1"/>
</dbReference>
<dbReference type="HAMAP" id="MF_01595">
    <property type="entry name" value="PNPase"/>
    <property type="match status" value="1"/>
</dbReference>
<dbReference type="InterPro" id="IPR001247">
    <property type="entry name" value="ExoRNase_PH_dom1"/>
</dbReference>
<dbReference type="InterPro" id="IPR015847">
    <property type="entry name" value="ExoRNase_PH_dom2"/>
</dbReference>
<dbReference type="InterPro" id="IPR036345">
    <property type="entry name" value="ExoRNase_PH_dom2_sf"/>
</dbReference>
<dbReference type="InterPro" id="IPR004087">
    <property type="entry name" value="KH_dom"/>
</dbReference>
<dbReference type="InterPro" id="IPR004088">
    <property type="entry name" value="KH_dom_type_1"/>
</dbReference>
<dbReference type="InterPro" id="IPR036612">
    <property type="entry name" value="KH_dom_type_1_sf"/>
</dbReference>
<dbReference type="InterPro" id="IPR012340">
    <property type="entry name" value="NA-bd_OB-fold"/>
</dbReference>
<dbReference type="InterPro" id="IPR012162">
    <property type="entry name" value="PNPase"/>
</dbReference>
<dbReference type="InterPro" id="IPR027408">
    <property type="entry name" value="PNPase/RNase_PH_dom_sf"/>
</dbReference>
<dbReference type="InterPro" id="IPR015848">
    <property type="entry name" value="PNPase_PH_RNA-bd_bac/org-type"/>
</dbReference>
<dbReference type="InterPro" id="IPR036456">
    <property type="entry name" value="PNPase_PH_RNA-bd_sf"/>
</dbReference>
<dbReference type="InterPro" id="IPR020568">
    <property type="entry name" value="Ribosomal_Su5_D2-typ_SF"/>
</dbReference>
<dbReference type="InterPro" id="IPR003029">
    <property type="entry name" value="S1_domain"/>
</dbReference>
<dbReference type="NCBIfam" id="TIGR03591">
    <property type="entry name" value="polynuc_phos"/>
    <property type="match status" value="1"/>
</dbReference>
<dbReference type="NCBIfam" id="NF008805">
    <property type="entry name" value="PRK11824.1"/>
    <property type="match status" value="1"/>
</dbReference>
<dbReference type="PANTHER" id="PTHR11252">
    <property type="entry name" value="POLYRIBONUCLEOTIDE NUCLEOTIDYLTRANSFERASE"/>
    <property type="match status" value="1"/>
</dbReference>
<dbReference type="PANTHER" id="PTHR11252:SF0">
    <property type="entry name" value="POLYRIBONUCLEOTIDE NUCLEOTIDYLTRANSFERASE 1, MITOCHONDRIAL"/>
    <property type="match status" value="1"/>
</dbReference>
<dbReference type="Pfam" id="PF00013">
    <property type="entry name" value="KH_1"/>
    <property type="match status" value="1"/>
</dbReference>
<dbReference type="Pfam" id="PF03726">
    <property type="entry name" value="PNPase"/>
    <property type="match status" value="1"/>
</dbReference>
<dbReference type="Pfam" id="PF01138">
    <property type="entry name" value="RNase_PH"/>
    <property type="match status" value="2"/>
</dbReference>
<dbReference type="Pfam" id="PF03725">
    <property type="entry name" value="RNase_PH_C"/>
    <property type="match status" value="2"/>
</dbReference>
<dbReference type="Pfam" id="PF00575">
    <property type="entry name" value="S1"/>
    <property type="match status" value="1"/>
</dbReference>
<dbReference type="PIRSF" id="PIRSF005499">
    <property type="entry name" value="PNPase"/>
    <property type="match status" value="1"/>
</dbReference>
<dbReference type="SMART" id="SM00322">
    <property type="entry name" value="KH"/>
    <property type="match status" value="1"/>
</dbReference>
<dbReference type="SMART" id="SM00316">
    <property type="entry name" value="S1"/>
    <property type="match status" value="1"/>
</dbReference>
<dbReference type="SUPFAM" id="SSF54791">
    <property type="entry name" value="Eukaryotic type KH-domain (KH-domain type I)"/>
    <property type="match status" value="1"/>
</dbReference>
<dbReference type="SUPFAM" id="SSF50249">
    <property type="entry name" value="Nucleic acid-binding proteins"/>
    <property type="match status" value="1"/>
</dbReference>
<dbReference type="SUPFAM" id="SSF46915">
    <property type="entry name" value="Polynucleotide phosphorylase/guanosine pentaphosphate synthase (PNPase/GPSI), domain 3"/>
    <property type="match status" value="1"/>
</dbReference>
<dbReference type="SUPFAM" id="SSF55666">
    <property type="entry name" value="Ribonuclease PH domain 2-like"/>
    <property type="match status" value="2"/>
</dbReference>
<dbReference type="SUPFAM" id="SSF54211">
    <property type="entry name" value="Ribosomal protein S5 domain 2-like"/>
    <property type="match status" value="2"/>
</dbReference>
<dbReference type="PROSITE" id="PS50084">
    <property type="entry name" value="KH_TYPE_1"/>
    <property type="match status" value="1"/>
</dbReference>
<dbReference type="PROSITE" id="PS50126">
    <property type="entry name" value="S1"/>
    <property type="match status" value="1"/>
</dbReference>
<reference key="1">
    <citation type="journal article" date="2006" name="Proc. Natl. Acad. Sci. U.S.A.">
        <title>Molecular genetic anatomy of inter- and intraserotype variation in the human bacterial pathogen group A Streptococcus.</title>
        <authorList>
            <person name="Beres S.B."/>
            <person name="Richter E.W."/>
            <person name="Nagiec M.J."/>
            <person name="Sumby P."/>
            <person name="Porcella S.F."/>
            <person name="DeLeo F.R."/>
            <person name="Musser J.M."/>
        </authorList>
    </citation>
    <scope>NUCLEOTIDE SEQUENCE [LARGE SCALE GENOMIC DNA]</scope>
    <source>
        <strain>MGAS10270</strain>
    </source>
</reference>
<sequence length="710" mass="77396">MSKQTFTTTFAGKPLVVEVGQVAKQANGATVVRYGESTVLTAAVMSKKMATGDFFPLQVNYEEKMYAAGKFPGGFMKREGRPSTDATLTARLIDRPIRPMFAEGFRNEVQVINTVLSYDENASAPMAAMFGSSLALSISDIPFNGPIAGVQVGYIDGEFIINPDKEQMEASLLELTVAGSKEAINMVESGAKELSEDIMLEALLKGHQAIQELIAFQEQIVAVVGKEKAEVELLQVDADLQADIVAKYNAQLQKAVQVEEKKAREAATEAVKEMVKAEYEERYAEDENLATIMRDVAEILEQMEHAEVRRLITEDKIRPDGRKIDEIRPLDAVVDFLPKVHGSGLFTRGQTQALSILTLAPMGETQIIDGLAPEYKKRFLHHYNFPQYSVGETGRYGAAGRREIGHGALGERALEQVLPSLEEFPYAIRLVAEVLESNGSSSQASICAGTLALMAGGVPIKAPVAGIAMGLISDGTNYTVLTDIQGLEDHFGDMDFKVAGTREGITALQMDIKIAGITPQILEEALAQAKKARFEILDVIEATIAEPRPELAPTAPKIDTIKIDVDKIKVVIGKGGETIDKIIAETGVKIDIDDEGNVSIYSSDQAAINRTKEIIAGLVREAKVGEVYHAKVVRIEKFGAFVNLFDKTDALVHISEIAWTRTTNVSDVLEVGEDVDVKVIKIDEKGRVDASMKALIPRPPKPEKKEEKHD</sequence>
<gene>
    <name evidence="1" type="primary">pnp</name>
    <name type="ordered locus">MGAS10270_Spy1728</name>
</gene>
<proteinExistence type="inferred from homology"/>
<keyword id="KW-0963">Cytoplasm</keyword>
<keyword id="KW-0460">Magnesium</keyword>
<keyword id="KW-0479">Metal-binding</keyword>
<keyword id="KW-0548">Nucleotidyltransferase</keyword>
<keyword id="KW-0694">RNA-binding</keyword>
<keyword id="KW-0808">Transferase</keyword>
<organism>
    <name type="scientific">Streptococcus pyogenes serotype M2 (strain MGAS10270)</name>
    <dbReference type="NCBI Taxonomy" id="370552"/>
    <lineage>
        <taxon>Bacteria</taxon>
        <taxon>Bacillati</taxon>
        <taxon>Bacillota</taxon>
        <taxon>Bacilli</taxon>
        <taxon>Lactobacillales</taxon>
        <taxon>Streptococcaceae</taxon>
        <taxon>Streptococcus</taxon>
    </lineage>
</organism>
<comment type="function">
    <text evidence="1">Involved in mRNA degradation. Catalyzes the phosphorolysis of single-stranded polyribonucleotides processively in the 3'- to 5'-direction.</text>
</comment>
<comment type="catalytic activity">
    <reaction evidence="1">
        <text>RNA(n+1) + phosphate = RNA(n) + a ribonucleoside 5'-diphosphate</text>
        <dbReference type="Rhea" id="RHEA:22096"/>
        <dbReference type="Rhea" id="RHEA-COMP:14527"/>
        <dbReference type="Rhea" id="RHEA-COMP:17342"/>
        <dbReference type="ChEBI" id="CHEBI:43474"/>
        <dbReference type="ChEBI" id="CHEBI:57930"/>
        <dbReference type="ChEBI" id="CHEBI:140395"/>
        <dbReference type="EC" id="2.7.7.8"/>
    </reaction>
</comment>
<comment type="cofactor">
    <cofactor evidence="1">
        <name>Mg(2+)</name>
        <dbReference type="ChEBI" id="CHEBI:18420"/>
    </cofactor>
</comment>
<comment type="subcellular location">
    <subcellularLocation>
        <location evidence="1">Cytoplasm</location>
    </subcellularLocation>
</comment>
<comment type="similarity">
    <text evidence="1">Belongs to the polyribonucleotide nucleotidyltransferase family.</text>
</comment>
<evidence type="ECO:0000255" key="1">
    <source>
        <dbReference type="HAMAP-Rule" id="MF_01595"/>
    </source>
</evidence>
<evidence type="ECO:0000256" key="2">
    <source>
        <dbReference type="SAM" id="MobiDB-lite"/>
    </source>
</evidence>
<accession>Q1JEW6</accession>